<feature type="chain" id="PRO_0000232319" description="ATP-dependent RNA helicase DBP10">
    <location>
        <begin position="1"/>
        <end position="1154"/>
    </location>
</feature>
<feature type="domain" description="Helicase ATP-binding" evidence="2">
    <location>
        <begin position="177"/>
        <end position="363"/>
    </location>
</feature>
<feature type="domain" description="Helicase C-terminal" evidence="3">
    <location>
        <begin position="446"/>
        <end position="602"/>
    </location>
</feature>
<feature type="region of interest" description="Disordered" evidence="4">
    <location>
        <begin position="16"/>
        <end position="58"/>
    </location>
</feature>
<feature type="region of interest" description="Disordered" evidence="4">
    <location>
        <begin position="417"/>
        <end position="462"/>
    </location>
</feature>
<feature type="region of interest" description="Disordered" evidence="4">
    <location>
        <begin position="826"/>
        <end position="859"/>
    </location>
</feature>
<feature type="region of interest" description="Disordered" evidence="4">
    <location>
        <begin position="885"/>
        <end position="939"/>
    </location>
</feature>
<feature type="region of interest" description="Disordered" evidence="4">
    <location>
        <begin position="1043"/>
        <end position="1154"/>
    </location>
</feature>
<feature type="short sequence motif" description="Q motif">
    <location>
        <begin position="144"/>
        <end position="172"/>
    </location>
</feature>
<feature type="short sequence motif" description="DEAD box">
    <location>
        <begin position="311"/>
        <end position="314"/>
    </location>
</feature>
<feature type="compositionally biased region" description="Polar residues" evidence="4">
    <location>
        <begin position="21"/>
        <end position="38"/>
    </location>
</feature>
<feature type="compositionally biased region" description="Basic and acidic residues" evidence="4">
    <location>
        <begin position="438"/>
        <end position="451"/>
    </location>
</feature>
<feature type="compositionally biased region" description="Basic residues" evidence="4">
    <location>
        <begin position="844"/>
        <end position="855"/>
    </location>
</feature>
<feature type="compositionally biased region" description="Basic residues" evidence="4">
    <location>
        <begin position="918"/>
        <end position="927"/>
    </location>
</feature>
<feature type="compositionally biased region" description="Basic and acidic residues" evidence="4">
    <location>
        <begin position="1043"/>
        <end position="1061"/>
    </location>
</feature>
<feature type="compositionally biased region" description="Basic and acidic residues" evidence="4">
    <location>
        <begin position="1098"/>
        <end position="1133"/>
    </location>
</feature>
<feature type="compositionally biased region" description="Basic residues" evidence="4">
    <location>
        <begin position="1134"/>
        <end position="1154"/>
    </location>
</feature>
<feature type="binding site" evidence="2">
    <location>
        <begin position="190"/>
        <end position="197"/>
    </location>
    <ligand>
        <name>ATP</name>
        <dbReference type="ChEBI" id="CHEBI:30616"/>
    </ligand>
</feature>
<gene>
    <name type="primary">DBP10</name>
    <name type="ORF">UMAG_05200</name>
</gene>
<protein>
    <recommendedName>
        <fullName>ATP-dependent RNA helicase DBP10</fullName>
        <ecNumber>3.6.4.13</ecNumber>
    </recommendedName>
</protein>
<proteinExistence type="inferred from homology"/>
<organism>
    <name type="scientific">Mycosarcoma maydis</name>
    <name type="common">Corn smut fungus</name>
    <name type="synonym">Ustilago maydis</name>
    <dbReference type="NCBI Taxonomy" id="5270"/>
    <lineage>
        <taxon>Eukaryota</taxon>
        <taxon>Fungi</taxon>
        <taxon>Dikarya</taxon>
        <taxon>Basidiomycota</taxon>
        <taxon>Ustilaginomycotina</taxon>
        <taxon>Ustilaginomycetes</taxon>
        <taxon>Ustilaginales</taxon>
        <taxon>Ustilaginaceae</taxon>
        <taxon>Mycosarcoma</taxon>
    </lineage>
</organism>
<dbReference type="EC" id="3.6.4.13"/>
<dbReference type="EMBL" id="CM003143">
    <property type="protein sequence ID" value="KIS70128.1"/>
    <property type="molecule type" value="Genomic_DNA"/>
</dbReference>
<dbReference type="RefSeq" id="XP_011388242.1">
    <property type="nucleotide sequence ID" value="XM_011389940.1"/>
</dbReference>
<dbReference type="SMR" id="Q4P3W3"/>
<dbReference type="FunCoup" id="Q4P3W3">
    <property type="interactions" value="675"/>
</dbReference>
<dbReference type="STRING" id="237631.Q4P3W3"/>
<dbReference type="EnsemblFungi" id="KIS70128">
    <property type="protein sequence ID" value="KIS70128"/>
    <property type="gene ID" value="UMAG_05200"/>
</dbReference>
<dbReference type="GeneID" id="23565152"/>
<dbReference type="KEGG" id="uma:UMAG_05200"/>
<dbReference type="VEuPathDB" id="FungiDB:UMAG_05200"/>
<dbReference type="eggNOG" id="KOG0337">
    <property type="taxonomic scope" value="Eukaryota"/>
</dbReference>
<dbReference type="HOGENOM" id="CLU_003041_5_1_1"/>
<dbReference type="InParanoid" id="Q4P3W3"/>
<dbReference type="OMA" id="EDQFGMM"/>
<dbReference type="OrthoDB" id="10261375at2759"/>
<dbReference type="Proteomes" id="UP000000561">
    <property type="component" value="Chromosome 4"/>
</dbReference>
<dbReference type="GO" id="GO:0005730">
    <property type="term" value="C:nucleolus"/>
    <property type="evidence" value="ECO:0000318"/>
    <property type="project" value="GO_Central"/>
</dbReference>
<dbReference type="GO" id="GO:0005524">
    <property type="term" value="F:ATP binding"/>
    <property type="evidence" value="ECO:0007669"/>
    <property type="project" value="UniProtKB-KW"/>
</dbReference>
<dbReference type="GO" id="GO:0016887">
    <property type="term" value="F:ATP hydrolysis activity"/>
    <property type="evidence" value="ECO:0007669"/>
    <property type="project" value="RHEA"/>
</dbReference>
<dbReference type="GO" id="GO:0003723">
    <property type="term" value="F:RNA binding"/>
    <property type="evidence" value="ECO:0007669"/>
    <property type="project" value="UniProtKB-KW"/>
</dbReference>
<dbReference type="GO" id="GO:0003724">
    <property type="term" value="F:RNA helicase activity"/>
    <property type="evidence" value="ECO:0007669"/>
    <property type="project" value="UniProtKB-EC"/>
</dbReference>
<dbReference type="GO" id="GO:0006364">
    <property type="term" value="P:rRNA processing"/>
    <property type="evidence" value="ECO:0000318"/>
    <property type="project" value="GO_Central"/>
</dbReference>
<dbReference type="CDD" id="cd17959">
    <property type="entry name" value="DEADc_DDX54"/>
    <property type="match status" value="1"/>
</dbReference>
<dbReference type="CDD" id="cd18787">
    <property type="entry name" value="SF2_C_DEAD"/>
    <property type="match status" value="1"/>
</dbReference>
<dbReference type="Gene3D" id="3.40.50.300">
    <property type="entry name" value="P-loop containing nucleotide triphosphate hydrolases"/>
    <property type="match status" value="2"/>
</dbReference>
<dbReference type="InterPro" id="IPR012541">
    <property type="entry name" value="DBP10_C"/>
</dbReference>
<dbReference type="InterPro" id="IPR033517">
    <property type="entry name" value="DDX54/DBP10_DEAD-box_helicase"/>
</dbReference>
<dbReference type="InterPro" id="IPR011545">
    <property type="entry name" value="DEAD/DEAH_box_helicase_dom"/>
</dbReference>
<dbReference type="InterPro" id="IPR050079">
    <property type="entry name" value="DEAD_box_RNA_helicase"/>
</dbReference>
<dbReference type="InterPro" id="IPR014001">
    <property type="entry name" value="Helicase_ATP-bd"/>
</dbReference>
<dbReference type="InterPro" id="IPR001650">
    <property type="entry name" value="Helicase_C-like"/>
</dbReference>
<dbReference type="InterPro" id="IPR027417">
    <property type="entry name" value="P-loop_NTPase"/>
</dbReference>
<dbReference type="InterPro" id="IPR000629">
    <property type="entry name" value="RNA-helicase_DEAD-box_CS"/>
</dbReference>
<dbReference type="InterPro" id="IPR014014">
    <property type="entry name" value="RNA_helicase_DEAD_Q_motif"/>
</dbReference>
<dbReference type="PANTHER" id="PTHR47959">
    <property type="entry name" value="ATP-DEPENDENT RNA HELICASE RHLE-RELATED"/>
    <property type="match status" value="1"/>
</dbReference>
<dbReference type="PANTHER" id="PTHR47959:SF8">
    <property type="entry name" value="RNA HELICASE"/>
    <property type="match status" value="1"/>
</dbReference>
<dbReference type="Pfam" id="PF08147">
    <property type="entry name" value="DBP10CT"/>
    <property type="match status" value="1"/>
</dbReference>
<dbReference type="Pfam" id="PF00270">
    <property type="entry name" value="DEAD"/>
    <property type="match status" value="1"/>
</dbReference>
<dbReference type="Pfam" id="PF00271">
    <property type="entry name" value="Helicase_C"/>
    <property type="match status" value="1"/>
</dbReference>
<dbReference type="SMART" id="SM01123">
    <property type="entry name" value="DBP10CT"/>
    <property type="match status" value="1"/>
</dbReference>
<dbReference type="SMART" id="SM00487">
    <property type="entry name" value="DEXDc"/>
    <property type="match status" value="1"/>
</dbReference>
<dbReference type="SMART" id="SM00490">
    <property type="entry name" value="HELICc"/>
    <property type="match status" value="1"/>
</dbReference>
<dbReference type="SUPFAM" id="SSF52540">
    <property type="entry name" value="P-loop containing nucleoside triphosphate hydrolases"/>
    <property type="match status" value="2"/>
</dbReference>
<dbReference type="PROSITE" id="PS00039">
    <property type="entry name" value="DEAD_ATP_HELICASE"/>
    <property type="match status" value="1"/>
</dbReference>
<dbReference type="PROSITE" id="PS51192">
    <property type="entry name" value="HELICASE_ATP_BIND_1"/>
    <property type="match status" value="1"/>
</dbReference>
<dbReference type="PROSITE" id="PS51194">
    <property type="entry name" value="HELICASE_CTER"/>
    <property type="match status" value="1"/>
</dbReference>
<dbReference type="PROSITE" id="PS51195">
    <property type="entry name" value="Q_MOTIF"/>
    <property type="match status" value="1"/>
</dbReference>
<name>DBP10_MYCMD</name>
<evidence type="ECO:0000250" key="1"/>
<evidence type="ECO:0000255" key="2">
    <source>
        <dbReference type="PROSITE-ProRule" id="PRU00541"/>
    </source>
</evidence>
<evidence type="ECO:0000255" key="3">
    <source>
        <dbReference type="PROSITE-ProRule" id="PRU00542"/>
    </source>
</evidence>
<evidence type="ECO:0000256" key="4">
    <source>
        <dbReference type="SAM" id="MobiDB-lite"/>
    </source>
</evidence>
<evidence type="ECO:0000305" key="5"/>
<comment type="function">
    <text evidence="1">ATP-binding RNA helicase involved in the biogenesis of 60S ribosomal subunits and is required for the normal formation of 25S and 5.8S rRNAs.</text>
</comment>
<comment type="catalytic activity">
    <reaction>
        <text>ATP + H2O = ADP + phosphate + H(+)</text>
        <dbReference type="Rhea" id="RHEA:13065"/>
        <dbReference type="ChEBI" id="CHEBI:15377"/>
        <dbReference type="ChEBI" id="CHEBI:15378"/>
        <dbReference type="ChEBI" id="CHEBI:30616"/>
        <dbReference type="ChEBI" id="CHEBI:43474"/>
        <dbReference type="ChEBI" id="CHEBI:456216"/>
        <dbReference type="EC" id="3.6.4.13"/>
    </reaction>
</comment>
<comment type="subcellular location">
    <subcellularLocation>
        <location evidence="1">Nucleus</location>
        <location evidence="1">Nucleolus</location>
    </subcellularLocation>
</comment>
<comment type="domain">
    <text>The Q motif is unique to and characteristic of the DEAD box family of RNA helicases and controls ATP binding and hydrolysis.</text>
</comment>
<comment type="similarity">
    <text evidence="5">Belongs to the DEAD box helicase family. DDX54/DBP10 subfamily.</text>
</comment>
<reference key="1">
    <citation type="journal article" date="2006" name="Nature">
        <title>Insights from the genome of the biotrophic fungal plant pathogen Ustilago maydis.</title>
        <authorList>
            <person name="Kaemper J."/>
            <person name="Kahmann R."/>
            <person name="Boelker M."/>
            <person name="Ma L.-J."/>
            <person name="Brefort T."/>
            <person name="Saville B.J."/>
            <person name="Banuett F."/>
            <person name="Kronstad J.W."/>
            <person name="Gold S.E."/>
            <person name="Mueller O."/>
            <person name="Perlin M.H."/>
            <person name="Woesten H.A.B."/>
            <person name="de Vries R."/>
            <person name="Ruiz-Herrera J."/>
            <person name="Reynaga-Pena C.G."/>
            <person name="Snetselaar K."/>
            <person name="McCann M."/>
            <person name="Perez-Martin J."/>
            <person name="Feldbruegge M."/>
            <person name="Basse C.W."/>
            <person name="Steinberg G."/>
            <person name="Ibeas J.I."/>
            <person name="Holloman W."/>
            <person name="Guzman P."/>
            <person name="Farman M.L."/>
            <person name="Stajich J.E."/>
            <person name="Sentandreu R."/>
            <person name="Gonzalez-Prieto J.M."/>
            <person name="Kennell J.C."/>
            <person name="Molina L."/>
            <person name="Schirawski J."/>
            <person name="Mendoza-Mendoza A."/>
            <person name="Greilinger D."/>
            <person name="Muench K."/>
            <person name="Roessel N."/>
            <person name="Scherer M."/>
            <person name="Vranes M."/>
            <person name="Ladendorf O."/>
            <person name="Vincon V."/>
            <person name="Fuchs U."/>
            <person name="Sandrock B."/>
            <person name="Meng S."/>
            <person name="Ho E.C.H."/>
            <person name="Cahill M.J."/>
            <person name="Boyce K.J."/>
            <person name="Klose J."/>
            <person name="Klosterman S.J."/>
            <person name="Deelstra H.J."/>
            <person name="Ortiz-Castellanos L."/>
            <person name="Li W."/>
            <person name="Sanchez-Alonso P."/>
            <person name="Schreier P.H."/>
            <person name="Haeuser-Hahn I."/>
            <person name="Vaupel M."/>
            <person name="Koopmann E."/>
            <person name="Friedrich G."/>
            <person name="Voss H."/>
            <person name="Schlueter T."/>
            <person name="Margolis J."/>
            <person name="Platt D."/>
            <person name="Swimmer C."/>
            <person name="Gnirke A."/>
            <person name="Chen F."/>
            <person name="Vysotskaia V."/>
            <person name="Mannhaupt G."/>
            <person name="Gueldener U."/>
            <person name="Muensterkoetter M."/>
            <person name="Haase D."/>
            <person name="Oesterheld M."/>
            <person name="Mewes H.-W."/>
            <person name="Mauceli E.W."/>
            <person name="DeCaprio D."/>
            <person name="Wade C.M."/>
            <person name="Butler J."/>
            <person name="Young S.K."/>
            <person name="Jaffe D.B."/>
            <person name="Calvo S.E."/>
            <person name="Nusbaum C."/>
            <person name="Galagan J.E."/>
            <person name="Birren B.W."/>
        </authorList>
    </citation>
    <scope>NUCLEOTIDE SEQUENCE [LARGE SCALE GENOMIC DNA]</scope>
    <source>
        <strain>DSM 14603 / FGSC 9021 / UM521</strain>
    </source>
</reference>
<reference key="2">
    <citation type="submission" date="2014-09" db="EMBL/GenBank/DDBJ databases">
        <authorList>
            <person name="Gueldener U."/>
            <person name="Muensterkoetter M."/>
            <person name="Walter M.C."/>
            <person name="Mannhaupt G."/>
            <person name="Kahmann R."/>
        </authorList>
    </citation>
    <scope>GENOME REANNOTATION</scope>
    <source>
        <strain>DSM 14603 / FGSC 9021 / UM521</strain>
    </source>
</reference>
<keyword id="KW-0067">ATP-binding</keyword>
<keyword id="KW-0347">Helicase</keyword>
<keyword id="KW-0378">Hydrolase</keyword>
<keyword id="KW-0547">Nucleotide-binding</keyword>
<keyword id="KW-0539">Nucleus</keyword>
<keyword id="KW-1185">Reference proteome</keyword>
<keyword id="KW-0690">Ribosome biogenesis</keyword>
<keyword id="KW-0694">RNA-binding</keyword>
<keyword id="KW-0698">rRNA processing</keyword>
<sequence length="1154" mass="126209">MAKTIDFLASDGEDNFAARTISATSKPNRNDATASSSKPQKRARRSTKGSDDDGNDDFDIASSLLASAAEPAAVGMLSSSQQASQKAYASRVSAKDDDDDDARFIASVMQHANIKAGLEVAKKALSGKNKGKNKLGSGVVTGGGSFQSMGLHPSLLRSLLIRGFTTPTPIQRQAIPAIMSQPPRDVVGMARTGSGKTLAYLIPLINRLNGRHSPTFGIKSLILCPSRELAVQILRVGKEIARGWKADAGEGQDSRGEAIRWAIIVGGESLDEQFGIMSNNPDVVIATPGRMLHLTVEMNLDLKSVEYVVFDEADRLFEMGFAEQLEEMLLRLPPTRQTLLFSATLPKKLVEFTKAGLQANPKLVRLDADSKISADLRMAFFSVKPSEKEAALLVLLRDVIGVPLGEQAARDLDEEAQFNEDASDNQADGQRSRGYGNRRAEFKGKTKDKHLGNKRKRGGPGGALELLPHQTIIFCATKHHVEYLLLLLTTTGYACSHIYSSLDQATRGIQMSRFRRGQNSLLIVTDVAARGIDLPVLEHVVNFDFPPQPRTFVHRVGRTARAGRNGWAWSMCTNAELPYLCDLQLFLARPLVSSHTAIAALANGRDVASADALGLHDSLILGTLPREALDLETEFISSSLTNTSSSTAHDFPALRAVADRAQQKYEKSIAKASQESHRRAKEMVKLGSIEQINIRTASGREGQVPEWTLAGSPLEEMAVHDVVKRPEVYGLNRANKADAVTSALGSDRMDDKVKRGTDNALKEADEAAKRAALLAKVNAFRPQETVFEIGIRGDATPLGALMRSRRQTMQVKTKRAEALEARKRAIEGGGDAMEDDEEVTKPKVAARNKGKKKATAGKADNDEAVVGDAMVDMEQADEADILAAFDTTKPSKAQVQREALTDSETDASESDRDAASARHTKRARTKKAAPTSYRDPNFYLSYEQQGSTSERGYSLNNARSHTDSFIQQASAVSFDLAGDDATLGTQSQRPNVTRWDSKKKNFIQATVGADNKKMIRTESGVRLPASFRSGRYEDWKREKRIDMPKTGEIESNNHRVHERSPPETSVMGLKRFRHTKLSAPKTAGVFGNRRPGQPKRQAAKDEVKSARQIQKDRELKEKRREKNARPSKSDTNRRAKRGAARRGRGGHGPRGASR</sequence>
<accession>Q4P3W3</accession>
<accession>A0A0D1CUM2</accession>